<name>PYRE_ECO27</name>
<comment type="function">
    <text evidence="1">Catalyzes the transfer of a ribosyl phosphate group from 5-phosphoribose 1-diphosphate to orotate, leading to the formation of orotidine monophosphate (OMP).</text>
</comment>
<comment type="catalytic activity">
    <reaction evidence="1">
        <text>orotidine 5'-phosphate + diphosphate = orotate + 5-phospho-alpha-D-ribose 1-diphosphate</text>
        <dbReference type="Rhea" id="RHEA:10380"/>
        <dbReference type="ChEBI" id="CHEBI:30839"/>
        <dbReference type="ChEBI" id="CHEBI:33019"/>
        <dbReference type="ChEBI" id="CHEBI:57538"/>
        <dbReference type="ChEBI" id="CHEBI:58017"/>
        <dbReference type="EC" id="2.4.2.10"/>
    </reaction>
</comment>
<comment type="cofactor">
    <cofactor evidence="1">
        <name>Mg(2+)</name>
        <dbReference type="ChEBI" id="CHEBI:18420"/>
    </cofactor>
</comment>
<comment type="pathway">
    <text evidence="1">Pyrimidine metabolism; UMP biosynthesis via de novo pathway; UMP from orotate: step 1/2.</text>
</comment>
<comment type="subunit">
    <text evidence="1">Homodimer.</text>
</comment>
<comment type="similarity">
    <text evidence="1">Belongs to the purine/pyrimidine phosphoribosyltransferase family. PyrE subfamily.</text>
</comment>
<sequence>MKPYQRQFIEFALSKQVLKFGEFTLKSGRKSPYFFNAGLFNTGRDLALLGRFYAEALVDSGIEFDLLFGPAYKGIPIATTTAVALAEHHDLDLPYCFNRKEAKDHGEGGNLVGSALQGRVMLVDDVITAGTAIRESMEIIQANGATLAGVLISLDRQERGRGEISAIQEVERDYNCKVISIITLKDLIAYLEEKPEMAEHLAAVKAYREEFGV</sequence>
<keyword id="KW-0328">Glycosyltransferase</keyword>
<keyword id="KW-0460">Magnesium</keyword>
<keyword id="KW-0665">Pyrimidine biosynthesis</keyword>
<keyword id="KW-1185">Reference proteome</keyword>
<keyword id="KW-0808">Transferase</keyword>
<gene>
    <name evidence="1" type="primary">pyrE</name>
    <name type="ordered locus">E2348C_3891</name>
</gene>
<organism>
    <name type="scientific">Escherichia coli O127:H6 (strain E2348/69 / EPEC)</name>
    <dbReference type="NCBI Taxonomy" id="574521"/>
    <lineage>
        <taxon>Bacteria</taxon>
        <taxon>Pseudomonadati</taxon>
        <taxon>Pseudomonadota</taxon>
        <taxon>Gammaproteobacteria</taxon>
        <taxon>Enterobacterales</taxon>
        <taxon>Enterobacteriaceae</taxon>
        <taxon>Escherichia</taxon>
    </lineage>
</organism>
<reference key="1">
    <citation type="journal article" date="2009" name="J. Bacteriol.">
        <title>Complete genome sequence and comparative genome analysis of enteropathogenic Escherichia coli O127:H6 strain E2348/69.</title>
        <authorList>
            <person name="Iguchi A."/>
            <person name="Thomson N.R."/>
            <person name="Ogura Y."/>
            <person name="Saunders D."/>
            <person name="Ooka T."/>
            <person name="Henderson I.R."/>
            <person name="Harris D."/>
            <person name="Asadulghani M."/>
            <person name="Kurokawa K."/>
            <person name="Dean P."/>
            <person name="Kenny B."/>
            <person name="Quail M.A."/>
            <person name="Thurston S."/>
            <person name="Dougan G."/>
            <person name="Hayashi T."/>
            <person name="Parkhill J."/>
            <person name="Frankel G."/>
        </authorList>
    </citation>
    <scope>NUCLEOTIDE SEQUENCE [LARGE SCALE GENOMIC DNA]</scope>
    <source>
        <strain>E2348/69 / EPEC</strain>
    </source>
</reference>
<protein>
    <recommendedName>
        <fullName evidence="1">Orotate phosphoribosyltransferase</fullName>
        <shortName evidence="1">OPRT</shortName>
        <shortName evidence="1">OPRTase</shortName>
        <ecNumber evidence="1">2.4.2.10</ecNumber>
    </recommendedName>
</protein>
<evidence type="ECO:0000255" key="1">
    <source>
        <dbReference type="HAMAP-Rule" id="MF_01208"/>
    </source>
</evidence>
<proteinExistence type="inferred from homology"/>
<feature type="chain" id="PRO_1000164680" description="Orotate phosphoribosyltransferase">
    <location>
        <begin position="1"/>
        <end position="213"/>
    </location>
</feature>
<feature type="binding site" description="in other chain" evidence="1">
    <location>
        <position position="26"/>
    </location>
    <ligand>
        <name>5-phospho-alpha-D-ribose 1-diphosphate</name>
        <dbReference type="ChEBI" id="CHEBI:58017"/>
        <note>ligand shared between dimeric partners</note>
    </ligand>
</feature>
<feature type="binding site" evidence="1">
    <location>
        <begin position="34"/>
        <end position="35"/>
    </location>
    <ligand>
        <name>orotate</name>
        <dbReference type="ChEBI" id="CHEBI:30839"/>
    </ligand>
</feature>
<feature type="binding site" description="in other chain" evidence="1">
    <location>
        <begin position="72"/>
        <end position="73"/>
    </location>
    <ligand>
        <name>5-phospho-alpha-D-ribose 1-diphosphate</name>
        <dbReference type="ChEBI" id="CHEBI:58017"/>
        <note>ligand shared between dimeric partners</note>
    </ligand>
</feature>
<feature type="binding site" evidence="1">
    <location>
        <position position="99"/>
    </location>
    <ligand>
        <name>5-phospho-alpha-D-ribose 1-diphosphate</name>
        <dbReference type="ChEBI" id="CHEBI:58017"/>
        <note>ligand shared between dimeric partners</note>
    </ligand>
</feature>
<feature type="binding site" description="in other chain" evidence="1">
    <location>
        <position position="100"/>
    </location>
    <ligand>
        <name>5-phospho-alpha-D-ribose 1-diphosphate</name>
        <dbReference type="ChEBI" id="CHEBI:58017"/>
        <note>ligand shared between dimeric partners</note>
    </ligand>
</feature>
<feature type="binding site" evidence="1">
    <location>
        <position position="103"/>
    </location>
    <ligand>
        <name>5-phospho-alpha-D-ribose 1-diphosphate</name>
        <dbReference type="ChEBI" id="CHEBI:58017"/>
        <note>ligand shared between dimeric partners</note>
    </ligand>
</feature>
<feature type="binding site" evidence="1">
    <location>
        <position position="105"/>
    </location>
    <ligand>
        <name>5-phospho-alpha-D-ribose 1-diphosphate</name>
        <dbReference type="ChEBI" id="CHEBI:58017"/>
        <note>ligand shared between dimeric partners</note>
    </ligand>
</feature>
<feature type="binding site" description="in other chain" evidence="1">
    <location>
        <begin position="124"/>
        <end position="132"/>
    </location>
    <ligand>
        <name>5-phospho-alpha-D-ribose 1-diphosphate</name>
        <dbReference type="ChEBI" id="CHEBI:58017"/>
        <note>ligand shared between dimeric partners</note>
    </ligand>
</feature>
<feature type="binding site" evidence="1">
    <location>
        <position position="128"/>
    </location>
    <ligand>
        <name>orotate</name>
        <dbReference type="ChEBI" id="CHEBI:30839"/>
    </ligand>
</feature>
<feature type="binding site" evidence="1">
    <location>
        <position position="156"/>
    </location>
    <ligand>
        <name>orotate</name>
        <dbReference type="ChEBI" id="CHEBI:30839"/>
    </ligand>
</feature>
<dbReference type="EC" id="2.4.2.10" evidence="1"/>
<dbReference type="EMBL" id="FM180568">
    <property type="protein sequence ID" value="CAS11439.1"/>
    <property type="molecule type" value="Genomic_DNA"/>
</dbReference>
<dbReference type="RefSeq" id="WP_000806177.1">
    <property type="nucleotide sequence ID" value="NC_011601.1"/>
</dbReference>
<dbReference type="SMR" id="B7UM49"/>
<dbReference type="GeneID" id="75202211"/>
<dbReference type="KEGG" id="ecg:E2348C_3891"/>
<dbReference type="HOGENOM" id="CLU_074878_0_1_6"/>
<dbReference type="UniPathway" id="UPA00070">
    <property type="reaction ID" value="UER00119"/>
</dbReference>
<dbReference type="Proteomes" id="UP000008205">
    <property type="component" value="Chromosome"/>
</dbReference>
<dbReference type="GO" id="GO:0005737">
    <property type="term" value="C:cytoplasm"/>
    <property type="evidence" value="ECO:0007669"/>
    <property type="project" value="TreeGrafter"/>
</dbReference>
<dbReference type="GO" id="GO:0000287">
    <property type="term" value="F:magnesium ion binding"/>
    <property type="evidence" value="ECO:0007669"/>
    <property type="project" value="UniProtKB-UniRule"/>
</dbReference>
<dbReference type="GO" id="GO:0004588">
    <property type="term" value="F:orotate phosphoribosyltransferase activity"/>
    <property type="evidence" value="ECO:0007669"/>
    <property type="project" value="UniProtKB-UniRule"/>
</dbReference>
<dbReference type="GO" id="GO:0006207">
    <property type="term" value="P:'de novo' pyrimidine nucleobase biosynthetic process"/>
    <property type="evidence" value="ECO:0007669"/>
    <property type="project" value="TreeGrafter"/>
</dbReference>
<dbReference type="GO" id="GO:0044205">
    <property type="term" value="P:'de novo' UMP biosynthetic process"/>
    <property type="evidence" value="ECO:0007669"/>
    <property type="project" value="UniProtKB-UniRule"/>
</dbReference>
<dbReference type="GO" id="GO:0046132">
    <property type="term" value="P:pyrimidine ribonucleoside biosynthetic process"/>
    <property type="evidence" value="ECO:0007669"/>
    <property type="project" value="TreeGrafter"/>
</dbReference>
<dbReference type="CDD" id="cd06223">
    <property type="entry name" value="PRTases_typeI"/>
    <property type="match status" value="1"/>
</dbReference>
<dbReference type="FunFam" id="3.40.50.2020:FF:000008">
    <property type="entry name" value="Orotate phosphoribosyltransferase"/>
    <property type="match status" value="1"/>
</dbReference>
<dbReference type="Gene3D" id="3.40.50.2020">
    <property type="match status" value="1"/>
</dbReference>
<dbReference type="HAMAP" id="MF_01208">
    <property type="entry name" value="PyrE"/>
    <property type="match status" value="1"/>
</dbReference>
<dbReference type="InterPro" id="IPR023031">
    <property type="entry name" value="OPRT"/>
</dbReference>
<dbReference type="InterPro" id="IPR004467">
    <property type="entry name" value="Or_phspho_trans_dom"/>
</dbReference>
<dbReference type="InterPro" id="IPR000836">
    <property type="entry name" value="PRibTrfase_dom"/>
</dbReference>
<dbReference type="InterPro" id="IPR029057">
    <property type="entry name" value="PRTase-like"/>
</dbReference>
<dbReference type="NCBIfam" id="TIGR00336">
    <property type="entry name" value="pyrE"/>
    <property type="match status" value="1"/>
</dbReference>
<dbReference type="PANTHER" id="PTHR46683">
    <property type="entry name" value="OROTATE PHOSPHORIBOSYLTRANSFERASE 1-RELATED"/>
    <property type="match status" value="1"/>
</dbReference>
<dbReference type="PANTHER" id="PTHR46683:SF1">
    <property type="entry name" value="OROTATE PHOSPHORIBOSYLTRANSFERASE 1-RELATED"/>
    <property type="match status" value="1"/>
</dbReference>
<dbReference type="Pfam" id="PF00156">
    <property type="entry name" value="Pribosyltran"/>
    <property type="match status" value="1"/>
</dbReference>
<dbReference type="SUPFAM" id="SSF53271">
    <property type="entry name" value="PRTase-like"/>
    <property type="match status" value="1"/>
</dbReference>
<dbReference type="PROSITE" id="PS00103">
    <property type="entry name" value="PUR_PYR_PR_TRANSFER"/>
    <property type="match status" value="1"/>
</dbReference>
<accession>B7UM49</accession>